<keyword id="KW-1015">Disulfide bond</keyword>
<keyword id="KW-0964">Secreted</keyword>
<keyword id="KW-0732">Signal</keyword>
<keyword id="KW-0800">Toxin</keyword>
<accession>L0GCW2</accession>
<protein>
    <recommendedName>
        <fullName evidence="4">Scorpine-like-2</fullName>
        <shortName evidence="6">SCl1</shortName>
        <shortName evidence="4">UySCl1</shortName>
    </recommendedName>
</protein>
<reference key="1">
    <citation type="journal article" date="2013" name="Toxicon">
        <title>Characterization of the venom from the Australian scorpion Urodacus yaschenkoi: molecular mass analysis of components, cDNA sequences and peptides with antimicrobial activity.</title>
        <authorList>
            <person name="Luna-Ramirez K."/>
            <person name="Quintero-Hernandez V."/>
            <person name="Vargas-Jaimes L."/>
            <person name="Batista C.V."/>
            <person name="Winkel K.D."/>
            <person name="Possani L.D."/>
        </authorList>
    </citation>
    <scope>NUCLEOTIDE SEQUENCE [MRNA]</scope>
    <source>
        <tissue>Venom gland</tissue>
    </source>
</reference>
<dbReference type="EMBL" id="JX274245">
    <property type="protein sequence ID" value="AGA82759.1"/>
    <property type="molecule type" value="mRNA"/>
</dbReference>
<dbReference type="SMR" id="L0GCW2"/>
<dbReference type="GO" id="GO:0005576">
    <property type="term" value="C:extracellular region"/>
    <property type="evidence" value="ECO:0007669"/>
    <property type="project" value="UniProtKB-SubCell"/>
</dbReference>
<dbReference type="GO" id="GO:0090729">
    <property type="term" value="F:toxin activity"/>
    <property type="evidence" value="ECO:0007669"/>
    <property type="project" value="UniProtKB-KW"/>
</dbReference>
<dbReference type="InterPro" id="IPR029237">
    <property type="entry name" value="Long_scorpion_toxin_alpha/beta"/>
</dbReference>
<dbReference type="Pfam" id="PF14866">
    <property type="entry name" value="Scorpion_toxin_alpha-beta"/>
    <property type="match status" value="1"/>
</dbReference>
<dbReference type="PROSITE" id="PS51862">
    <property type="entry name" value="BSPN_CSAB"/>
    <property type="match status" value="1"/>
</dbReference>
<feature type="signal peptide" evidence="2">
    <location>
        <begin position="1"/>
        <end position="19"/>
    </location>
</feature>
<feature type="chain" id="PRO_5001091947" description="Scorpine-like-2" evidence="6">
    <location>
        <begin position="20"/>
        <end position="102"/>
    </location>
</feature>
<feature type="domain" description="BetaSPN-type CS-alpha/beta" evidence="3">
    <location>
        <begin position="63"/>
        <end position="102"/>
    </location>
</feature>
<feature type="disulfide bond" evidence="3">
    <location>
        <begin position="66"/>
        <end position="89"/>
    </location>
</feature>
<feature type="disulfide bond" evidence="3">
    <location>
        <begin position="75"/>
        <end position="94"/>
    </location>
</feature>
<feature type="disulfide bond" evidence="3">
    <location>
        <begin position="79"/>
        <end position="96"/>
    </location>
</feature>
<comment type="function">
    <text evidence="1">Inhibits voltage-gated potassium channels.</text>
</comment>
<comment type="subcellular location">
    <subcellularLocation>
        <location evidence="6">Secreted</location>
    </subcellularLocation>
</comment>
<comment type="tissue specificity">
    <text evidence="6">Expressed by the venom gland.</text>
</comment>
<comment type="similarity">
    <text evidence="5">Belongs to the long chain scorpion toxin family. Class 3 subfamily.</text>
</comment>
<proteinExistence type="inferred from homology"/>
<evidence type="ECO:0000250" key="1">
    <source>
        <dbReference type="UniProtKB" id="P0DL47"/>
    </source>
</evidence>
<evidence type="ECO:0000255" key="2"/>
<evidence type="ECO:0000255" key="3">
    <source>
        <dbReference type="PROSITE-ProRule" id="PRU01209"/>
    </source>
</evidence>
<evidence type="ECO:0000303" key="4">
    <source>
    </source>
</evidence>
<evidence type="ECO:0000305" key="5"/>
<evidence type="ECO:0000305" key="6">
    <source>
    </source>
</evidence>
<name>KBX32_UROYA</name>
<organism>
    <name type="scientific">Urodacus yaschenkoi</name>
    <name type="common">Inland robust scorpion</name>
    <dbReference type="NCBI Taxonomy" id="1273102"/>
    <lineage>
        <taxon>Eukaryota</taxon>
        <taxon>Metazoa</taxon>
        <taxon>Ecdysozoa</taxon>
        <taxon>Arthropoda</taxon>
        <taxon>Chelicerata</taxon>
        <taxon>Arachnida</taxon>
        <taxon>Scorpiones</taxon>
        <taxon>Iurida</taxon>
        <taxon>Scorpionoidea</taxon>
        <taxon>Scorpionidae</taxon>
        <taxon>Urodacinae</taxon>
        <taxon>Urodacus</taxon>
    </lineage>
</organism>
<sequence length="102" mass="11274">MQTQCTVLQLLVLVALCSCGGILKEKYFQKGVDYLTSHIPIPVVKDVVKSAAKQLVHKISKNQQLCLIVDTVQWCNKSCLAAENKEGYCHGTKCKCGIKVSY</sequence>